<organism>
    <name type="scientific">Dehalococcoides mccartyi (strain ATCC BAA-2100 / JCM 16839 / KCTC 5957 / BAV1)</name>
    <dbReference type="NCBI Taxonomy" id="216389"/>
    <lineage>
        <taxon>Bacteria</taxon>
        <taxon>Bacillati</taxon>
        <taxon>Chloroflexota</taxon>
        <taxon>Dehalococcoidia</taxon>
        <taxon>Dehalococcoidales</taxon>
        <taxon>Dehalococcoidaceae</taxon>
        <taxon>Dehalococcoides</taxon>
    </lineage>
</organism>
<gene>
    <name evidence="1" type="primary">tgt</name>
    <name type="ordered locus">DehaBAV1_0049</name>
</gene>
<feature type="chain" id="PRO_1000077003" description="Queuine tRNA-ribosyltransferase">
    <location>
        <begin position="1"/>
        <end position="392"/>
    </location>
</feature>
<feature type="region of interest" description="RNA binding" evidence="1">
    <location>
        <begin position="247"/>
        <end position="253"/>
    </location>
</feature>
<feature type="region of interest" description="RNA binding; important for wobble base 34 recognition" evidence="1">
    <location>
        <begin position="271"/>
        <end position="275"/>
    </location>
</feature>
<feature type="active site" description="Proton acceptor" evidence="1">
    <location>
        <position position="93"/>
    </location>
</feature>
<feature type="active site" description="Nucleophile" evidence="1">
    <location>
        <position position="266"/>
    </location>
</feature>
<feature type="binding site" evidence="1">
    <location>
        <begin position="93"/>
        <end position="97"/>
    </location>
    <ligand>
        <name>substrate</name>
    </ligand>
</feature>
<feature type="binding site" evidence="1">
    <location>
        <position position="147"/>
    </location>
    <ligand>
        <name>substrate</name>
    </ligand>
</feature>
<feature type="binding site" evidence="1">
    <location>
        <position position="189"/>
    </location>
    <ligand>
        <name>substrate</name>
    </ligand>
</feature>
<feature type="binding site" evidence="1">
    <location>
        <position position="216"/>
    </location>
    <ligand>
        <name>substrate</name>
    </ligand>
</feature>
<feature type="binding site" evidence="1">
    <location>
        <position position="304"/>
    </location>
    <ligand>
        <name>Zn(2+)</name>
        <dbReference type="ChEBI" id="CHEBI:29105"/>
    </ligand>
</feature>
<feature type="binding site" evidence="1">
    <location>
        <position position="306"/>
    </location>
    <ligand>
        <name>Zn(2+)</name>
        <dbReference type="ChEBI" id="CHEBI:29105"/>
    </ligand>
</feature>
<feature type="binding site" evidence="1">
    <location>
        <position position="309"/>
    </location>
    <ligand>
        <name>Zn(2+)</name>
        <dbReference type="ChEBI" id="CHEBI:29105"/>
    </ligand>
</feature>
<feature type="binding site" evidence="1">
    <location>
        <position position="335"/>
    </location>
    <ligand>
        <name>Zn(2+)</name>
        <dbReference type="ChEBI" id="CHEBI:29105"/>
    </ligand>
</feature>
<dbReference type="EC" id="2.4.2.29" evidence="1"/>
<dbReference type="EMBL" id="CP000688">
    <property type="protein sequence ID" value="ABQ16641.1"/>
    <property type="molecule type" value="Genomic_DNA"/>
</dbReference>
<dbReference type="SMR" id="A5FSU3"/>
<dbReference type="KEGG" id="deb:DehaBAV1_0049"/>
<dbReference type="PATRIC" id="fig|216389.18.peg.51"/>
<dbReference type="HOGENOM" id="CLU_022060_0_1_0"/>
<dbReference type="UniPathway" id="UPA00392"/>
<dbReference type="GO" id="GO:0005829">
    <property type="term" value="C:cytosol"/>
    <property type="evidence" value="ECO:0007669"/>
    <property type="project" value="TreeGrafter"/>
</dbReference>
<dbReference type="GO" id="GO:0046872">
    <property type="term" value="F:metal ion binding"/>
    <property type="evidence" value="ECO:0007669"/>
    <property type="project" value="UniProtKB-KW"/>
</dbReference>
<dbReference type="GO" id="GO:0008479">
    <property type="term" value="F:tRNA-guanosine(34) queuine transglycosylase activity"/>
    <property type="evidence" value="ECO:0007669"/>
    <property type="project" value="UniProtKB-UniRule"/>
</dbReference>
<dbReference type="GO" id="GO:0008616">
    <property type="term" value="P:queuosine biosynthetic process"/>
    <property type="evidence" value="ECO:0007669"/>
    <property type="project" value="UniProtKB-UniRule"/>
</dbReference>
<dbReference type="GO" id="GO:0002099">
    <property type="term" value="P:tRNA wobble guanine modification"/>
    <property type="evidence" value="ECO:0007669"/>
    <property type="project" value="TreeGrafter"/>
</dbReference>
<dbReference type="GO" id="GO:0101030">
    <property type="term" value="P:tRNA-guanine transglycosylation"/>
    <property type="evidence" value="ECO:0007669"/>
    <property type="project" value="InterPro"/>
</dbReference>
<dbReference type="FunFam" id="3.20.20.105:FF:000001">
    <property type="entry name" value="Queuine tRNA-ribosyltransferase"/>
    <property type="match status" value="1"/>
</dbReference>
<dbReference type="Gene3D" id="3.20.20.105">
    <property type="entry name" value="Queuine tRNA-ribosyltransferase-like"/>
    <property type="match status" value="1"/>
</dbReference>
<dbReference type="HAMAP" id="MF_00168">
    <property type="entry name" value="Q_tRNA_Tgt"/>
    <property type="match status" value="1"/>
</dbReference>
<dbReference type="InterPro" id="IPR050076">
    <property type="entry name" value="ArchSynthase1/Queuine_TRR"/>
</dbReference>
<dbReference type="InterPro" id="IPR004803">
    <property type="entry name" value="TGT"/>
</dbReference>
<dbReference type="InterPro" id="IPR036511">
    <property type="entry name" value="TGT-like_sf"/>
</dbReference>
<dbReference type="InterPro" id="IPR002616">
    <property type="entry name" value="tRNA_ribo_trans-like"/>
</dbReference>
<dbReference type="NCBIfam" id="TIGR00430">
    <property type="entry name" value="Q_tRNA_tgt"/>
    <property type="match status" value="1"/>
</dbReference>
<dbReference type="NCBIfam" id="TIGR00449">
    <property type="entry name" value="tgt_general"/>
    <property type="match status" value="1"/>
</dbReference>
<dbReference type="PANTHER" id="PTHR46499">
    <property type="entry name" value="QUEUINE TRNA-RIBOSYLTRANSFERASE"/>
    <property type="match status" value="1"/>
</dbReference>
<dbReference type="PANTHER" id="PTHR46499:SF1">
    <property type="entry name" value="QUEUINE TRNA-RIBOSYLTRANSFERASE"/>
    <property type="match status" value="1"/>
</dbReference>
<dbReference type="Pfam" id="PF01702">
    <property type="entry name" value="TGT"/>
    <property type="match status" value="1"/>
</dbReference>
<dbReference type="SUPFAM" id="SSF51713">
    <property type="entry name" value="tRNA-guanine transglycosylase"/>
    <property type="match status" value="1"/>
</dbReference>
<protein>
    <recommendedName>
        <fullName evidence="1">Queuine tRNA-ribosyltransferase</fullName>
        <ecNumber evidence="1">2.4.2.29</ecNumber>
    </recommendedName>
    <alternativeName>
        <fullName evidence="1">Guanine insertion enzyme</fullName>
    </alternativeName>
    <alternativeName>
        <fullName evidence="1">tRNA-guanine transglycosylase</fullName>
    </alternativeName>
</protein>
<accession>A5FSU3</accession>
<evidence type="ECO:0000255" key="1">
    <source>
        <dbReference type="HAMAP-Rule" id="MF_00168"/>
    </source>
</evidence>
<sequence>MDKSFILNKTSSRSLARRGQLFTAHGKVETPVFCPVGSQATVKTLTPEDLKSVNINMILSNTYHLYLRPGIPIIKEMGGLHKFMNWDGVILTDSGGYQIFSLANLRKLDEGGVSFRSHIDGSTRYITPEDAVSFQQDLGSDIAMVLDECPHSEASENEVLAAMERTHQWAKRCLAAHTLKSQHLFAIVQGGLSPELRRQSAEYLASLDFPGYALGGLSLGEPKDITFETVRHTLRFLPENKPRYLMGVGAPEDLLEGVSCGVDIFDCVLPTRVARNGAFFSRLGRLNIRNAAFATQKGPIDPDCNCYTCRNYSAAYLHHLFRCEEILAYRLATIHNIAFLSNLMQEIRTSIEKDCFEEFKADFLSRYQPTNEAIRIEQKQKWLFGRNGEPPS</sequence>
<comment type="function">
    <text evidence="1">Catalyzes the base-exchange of a guanine (G) residue with the queuine precursor 7-aminomethyl-7-deazaguanine (PreQ1) at position 34 (anticodon wobble position) in tRNAs with GU(N) anticodons (tRNA-Asp, -Asn, -His and -Tyr). Catalysis occurs through a double-displacement mechanism. The nucleophile active site attacks the C1' of nucleotide 34 to detach the guanine base from the RNA, forming a covalent enzyme-RNA intermediate. The proton acceptor active site deprotonates the incoming PreQ1, allowing a nucleophilic attack on the C1' of the ribose to form the product. After dissociation, two additional enzymatic reactions on the tRNA convert PreQ1 to queuine (Q), resulting in the hypermodified nucleoside queuosine (7-(((4,5-cis-dihydroxy-2-cyclopenten-1-yl)amino)methyl)-7-deazaguanosine).</text>
</comment>
<comment type="catalytic activity">
    <reaction evidence="1">
        <text>7-aminomethyl-7-carbaguanine + guanosine(34) in tRNA = 7-aminomethyl-7-carbaguanosine(34) in tRNA + guanine</text>
        <dbReference type="Rhea" id="RHEA:24104"/>
        <dbReference type="Rhea" id="RHEA-COMP:10341"/>
        <dbReference type="Rhea" id="RHEA-COMP:10342"/>
        <dbReference type="ChEBI" id="CHEBI:16235"/>
        <dbReference type="ChEBI" id="CHEBI:58703"/>
        <dbReference type="ChEBI" id="CHEBI:74269"/>
        <dbReference type="ChEBI" id="CHEBI:82833"/>
        <dbReference type="EC" id="2.4.2.29"/>
    </reaction>
</comment>
<comment type="cofactor">
    <cofactor evidence="1">
        <name>Zn(2+)</name>
        <dbReference type="ChEBI" id="CHEBI:29105"/>
    </cofactor>
    <text evidence="1">Binds 1 zinc ion per subunit.</text>
</comment>
<comment type="pathway">
    <text evidence="1">tRNA modification; tRNA-queuosine biosynthesis.</text>
</comment>
<comment type="subunit">
    <text evidence="1">Homodimer. Within each dimer, one monomer is responsible for RNA recognition and catalysis, while the other monomer binds to the replacement base PreQ1.</text>
</comment>
<comment type="similarity">
    <text evidence="1">Belongs to the queuine tRNA-ribosyltransferase family.</text>
</comment>
<proteinExistence type="inferred from homology"/>
<name>TGT_DEHMB</name>
<reference key="1">
    <citation type="submission" date="2007-05" db="EMBL/GenBank/DDBJ databases">
        <title>Complete sequence of Dehalococcoides sp. BAV1.</title>
        <authorList>
            <consortium name="US DOE Joint Genome Institute"/>
            <person name="Copeland A."/>
            <person name="Lucas S."/>
            <person name="Lapidus A."/>
            <person name="Barry K."/>
            <person name="Detter J.C."/>
            <person name="Glavina del Rio T."/>
            <person name="Hammon N."/>
            <person name="Israni S."/>
            <person name="Pitluck S."/>
            <person name="Lowry S."/>
            <person name="Clum A."/>
            <person name="Schmutz J."/>
            <person name="Larimer F."/>
            <person name="Land M."/>
            <person name="Hauser L."/>
            <person name="Kyrpides N."/>
            <person name="Kim E."/>
            <person name="Ritalahti K.M."/>
            <person name="Loeffler F."/>
            <person name="Richardson P."/>
        </authorList>
    </citation>
    <scope>NUCLEOTIDE SEQUENCE [LARGE SCALE GENOMIC DNA]</scope>
    <source>
        <strain>ATCC BAA-2100 / JCM 16839 / KCTC 5957 / BAV1</strain>
    </source>
</reference>
<keyword id="KW-0328">Glycosyltransferase</keyword>
<keyword id="KW-0479">Metal-binding</keyword>
<keyword id="KW-0671">Queuosine biosynthesis</keyword>
<keyword id="KW-0808">Transferase</keyword>
<keyword id="KW-0819">tRNA processing</keyword>
<keyword id="KW-0862">Zinc</keyword>